<accession>Q9HP73</accession>
<evidence type="ECO:0000305" key="1"/>
<organism>
    <name type="scientific">Halobacterium salinarum (strain ATCC 700922 / JCM 11081 / NRC-1)</name>
    <name type="common">Halobacterium halobium</name>
    <dbReference type="NCBI Taxonomy" id="64091"/>
    <lineage>
        <taxon>Archaea</taxon>
        <taxon>Methanobacteriati</taxon>
        <taxon>Methanobacteriota</taxon>
        <taxon>Stenosarchaea group</taxon>
        <taxon>Halobacteria</taxon>
        <taxon>Halobacteriales</taxon>
        <taxon>Halobacteriaceae</taxon>
        <taxon>Halobacterium</taxon>
        <taxon>Halobacterium salinarum NRC-34001</taxon>
    </lineage>
</organism>
<dbReference type="EC" id="4.2.1.96"/>
<dbReference type="EMBL" id="AE004437">
    <property type="protein sequence ID" value="AAG19997.1"/>
    <property type="molecule type" value="Genomic_DNA"/>
</dbReference>
<dbReference type="PIR" id="A84329">
    <property type="entry name" value="A84329"/>
</dbReference>
<dbReference type="RefSeq" id="WP_010903295.1">
    <property type="nucleotide sequence ID" value="NC_002607.1"/>
</dbReference>
<dbReference type="SMR" id="Q9HP73"/>
<dbReference type="STRING" id="64091.VNG_1773G"/>
<dbReference type="PaxDb" id="64091-VNG_1773G"/>
<dbReference type="KEGG" id="hal:VNG_1773G"/>
<dbReference type="PATRIC" id="fig|64091.14.peg.1352"/>
<dbReference type="HOGENOM" id="CLU_081974_4_3_2"/>
<dbReference type="InParanoid" id="Q9HP73"/>
<dbReference type="OrthoDB" id="10495at2157"/>
<dbReference type="PhylomeDB" id="Q9HP73"/>
<dbReference type="Proteomes" id="UP000000554">
    <property type="component" value="Chromosome"/>
</dbReference>
<dbReference type="GO" id="GO:0008124">
    <property type="term" value="F:4-alpha-hydroxytetrahydrobiopterin dehydratase activity"/>
    <property type="evidence" value="ECO:0000318"/>
    <property type="project" value="GO_Central"/>
</dbReference>
<dbReference type="GO" id="GO:0006729">
    <property type="term" value="P:tetrahydrobiopterin biosynthetic process"/>
    <property type="evidence" value="ECO:0007669"/>
    <property type="project" value="InterPro"/>
</dbReference>
<dbReference type="CDD" id="cd00488">
    <property type="entry name" value="PCD_DCoH"/>
    <property type="match status" value="1"/>
</dbReference>
<dbReference type="Gene3D" id="3.30.1360.20">
    <property type="entry name" value="Transcriptional coactivator/pterin dehydratase"/>
    <property type="match status" value="1"/>
</dbReference>
<dbReference type="HAMAP" id="MF_00434">
    <property type="entry name" value="Pterin_4_alpha"/>
    <property type="match status" value="1"/>
</dbReference>
<dbReference type="InterPro" id="IPR036428">
    <property type="entry name" value="PCD_sf"/>
</dbReference>
<dbReference type="InterPro" id="IPR001533">
    <property type="entry name" value="Pterin_deHydtase"/>
</dbReference>
<dbReference type="NCBIfam" id="NF002017">
    <property type="entry name" value="PRK00823.1-2"/>
    <property type="match status" value="1"/>
</dbReference>
<dbReference type="PANTHER" id="PTHR12599">
    <property type="entry name" value="PTERIN-4-ALPHA-CARBINOLAMINE DEHYDRATASE"/>
    <property type="match status" value="1"/>
</dbReference>
<dbReference type="PANTHER" id="PTHR12599:SF0">
    <property type="entry name" value="PTERIN-4-ALPHA-CARBINOLAMINE DEHYDRATASE"/>
    <property type="match status" value="1"/>
</dbReference>
<dbReference type="Pfam" id="PF01329">
    <property type="entry name" value="Pterin_4a"/>
    <property type="match status" value="1"/>
</dbReference>
<dbReference type="SUPFAM" id="SSF55248">
    <property type="entry name" value="PCD-like"/>
    <property type="match status" value="1"/>
</dbReference>
<reference key="1">
    <citation type="journal article" date="2000" name="Proc. Natl. Acad. Sci. U.S.A.">
        <title>Genome sequence of Halobacterium species NRC-1.</title>
        <authorList>
            <person name="Ng W.V."/>
            <person name="Kennedy S.P."/>
            <person name="Mahairas G.G."/>
            <person name="Berquist B."/>
            <person name="Pan M."/>
            <person name="Shukla H.D."/>
            <person name="Lasky S.R."/>
            <person name="Baliga N.S."/>
            <person name="Thorsson V."/>
            <person name="Sbrogna J."/>
            <person name="Swartzell S."/>
            <person name="Weir D."/>
            <person name="Hall J."/>
            <person name="Dahl T.A."/>
            <person name="Welti R."/>
            <person name="Goo Y.A."/>
            <person name="Leithauser B."/>
            <person name="Keller K."/>
            <person name="Cruz R."/>
            <person name="Danson M.J."/>
            <person name="Hough D.W."/>
            <person name="Maddocks D.G."/>
            <person name="Jablonski P.E."/>
            <person name="Krebs M.P."/>
            <person name="Angevine C.M."/>
            <person name="Dale H."/>
            <person name="Isenbarger T.A."/>
            <person name="Peck R.F."/>
            <person name="Pohlschroder M."/>
            <person name="Spudich J.L."/>
            <person name="Jung K.-H."/>
            <person name="Alam M."/>
            <person name="Freitas T."/>
            <person name="Hou S."/>
            <person name="Daniels C.J."/>
            <person name="Dennis P.P."/>
            <person name="Omer A.D."/>
            <person name="Ebhardt H."/>
            <person name="Lowe T.M."/>
            <person name="Liang P."/>
            <person name="Riley M."/>
            <person name="Hood L."/>
            <person name="DasSarma S."/>
        </authorList>
    </citation>
    <scope>NUCLEOTIDE SEQUENCE [LARGE SCALE GENOMIC DNA]</scope>
    <source>
        <strain>ATCC 700922 / JCM 11081 / NRC-1</strain>
    </source>
</reference>
<sequence>MSDRLDDDTISDRLPDDWIHDGDAITRTYTFEEYLDGVAFASEVGDLADEAFHHPEITIRYDEVEVRFTDHEAGGVTSQDIELARRTDDRR</sequence>
<gene>
    <name type="ordered locus">VNG_1773G</name>
</gene>
<feature type="chain" id="PRO_0000063109" description="Putative pterin-4-alpha-carbinolamine dehydratase">
    <location>
        <begin position="1"/>
        <end position="91"/>
    </location>
</feature>
<keyword id="KW-0456">Lyase</keyword>
<keyword id="KW-1185">Reference proteome</keyword>
<name>PHS_HALSA</name>
<proteinExistence type="inferred from homology"/>
<comment type="catalytic activity">
    <reaction>
        <text>(4aS,6R)-4a-hydroxy-L-erythro-5,6,7,8-tetrahydrobiopterin = (6R)-L-erythro-6,7-dihydrobiopterin + H2O</text>
        <dbReference type="Rhea" id="RHEA:11920"/>
        <dbReference type="ChEBI" id="CHEBI:15377"/>
        <dbReference type="ChEBI" id="CHEBI:15642"/>
        <dbReference type="ChEBI" id="CHEBI:43120"/>
        <dbReference type="EC" id="4.2.1.96"/>
    </reaction>
</comment>
<comment type="similarity">
    <text evidence="1">Belongs to the pterin-4-alpha-carbinolamine dehydratase family.</text>
</comment>
<protein>
    <recommendedName>
        <fullName>Putative pterin-4-alpha-carbinolamine dehydratase</fullName>
        <shortName>PHS</shortName>
        <ecNumber>4.2.1.96</ecNumber>
    </recommendedName>
    <alternativeName>
        <fullName>4-alpha-hydroxy-tetrahydropterin dehydratase</fullName>
    </alternativeName>
    <alternativeName>
        <fullName>Pterin carbinolamine dehydratase</fullName>
        <shortName>PCD</shortName>
    </alternativeName>
</protein>